<sequence>MTFPGDTAVLVLAAGPGTRMRSDTPKVLHTLAGRSMLSHVLHAIAKLAPQRLIVVLGHDHQRIAPLVGELADTLGRTIDVALQDRPLGTGHAVLCGLSALPDDYAGNVVVTSGDTPLLDADTLADLIATHRAVSAAVTVLTTTLDDPFGYGRILRTQDHEVMAIVEQTDATPSQREIREVNAGVYAFDIAALRSALSRLSSNNAQQELYLTDVIAILRSDGQTVHASHVDDSALVAGVNNRVQLAELASELNRRVVAAHQLAGVTVVDPATTWIDVDVTIGRDTVIHPGTQLLGRTQIGGRCVVGPDTTLTDVAVGDGASVVRTHGSSSSIGDGAAVGPFTYLRPGTALGADGKLGAFVEVKNSTIGTGTKVPHLTYVGDADIGEYSNIGASSVFVNYDGTSKRRTTVGSHVRTGSDTMFVAPVTIGDGAYTGAGTVVREDVPPGALAVSAGPQRNIENWVQRKRPGSPAAQASKRASEMACQQPTQPPDADQTP</sequence>
<organism>
    <name type="scientific">Mycobacterium tuberculosis (strain CDC 1551 / Oshkosh)</name>
    <dbReference type="NCBI Taxonomy" id="83331"/>
    <lineage>
        <taxon>Bacteria</taxon>
        <taxon>Bacillati</taxon>
        <taxon>Actinomycetota</taxon>
        <taxon>Actinomycetes</taxon>
        <taxon>Mycobacteriales</taxon>
        <taxon>Mycobacteriaceae</taxon>
        <taxon>Mycobacterium</taxon>
        <taxon>Mycobacterium tuberculosis complex</taxon>
    </lineage>
</organism>
<evidence type="ECO:0000250" key="1"/>
<evidence type="ECO:0000255" key="2">
    <source>
        <dbReference type="HAMAP-Rule" id="MF_01631"/>
    </source>
</evidence>
<evidence type="ECO:0000256" key="3">
    <source>
        <dbReference type="SAM" id="MobiDB-lite"/>
    </source>
</evidence>
<evidence type="ECO:0000305" key="4"/>
<gene>
    <name evidence="2" type="primary">glmU</name>
    <name type="ordered locus">MT1046</name>
</gene>
<comment type="function">
    <text evidence="2">Catalyzes the last two sequential reactions in the de novo biosynthetic pathway for UDP-N-acetylglucosamine (UDP-GlcNAc). The C-terminal domain catalyzes the transfer of acetyl group from acetyl coenzyme A to glucosamine-1-phosphate (GlcN-1-P) to produce N-acetylglucosamine-1-phosphate (GlcNAc-1-P), which is converted into UDP-GlcNAc by the transfer of uridine 5-monophosphate (from uridine 5-triphosphate), a reaction catalyzed by the N-terminal domain.</text>
</comment>
<comment type="catalytic activity">
    <reaction evidence="2">
        <text>alpha-D-glucosamine 1-phosphate + acetyl-CoA = N-acetyl-alpha-D-glucosamine 1-phosphate + CoA + H(+)</text>
        <dbReference type="Rhea" id="RHEA:13725"/>
        <dbReference type="ChEBI" id="CHEBI:15378"/>
        <dbReference type="ChEBI" id="CHEBI:57287"/>
        <dbReference type="ChEBI" id="CHEBI:57288"/>
        <dbReference type="ChEBI" id="CHEBI:57776"/>
        <dbReference type="ChEBI" id="CHEBI:58516"/>
        <dbReference type="EC" id="2.3.1.157"/>
    </reaction>
</comment>
<comment type="catalytic activity">
    <reaction evidence="2">
        <text>N-acetyl-alpha-D-glucosamine 1-phosphate + UTP + H(+) = UDP-N-acetyl-alpha-D-glucosamine + diphosphate</text>
        <dbReference type="Rhea" id="RHEA:13509"/>
        <dbReference type="ChEBI" id="CHEBI:15378"/>
        <dbReference type="ChEBI" id="CHEBI:33019"/>
        <dbReference type="ChEBI" id="CHEBI:46398"/>
        <dbReference type="ChEBI" id="CHEBI:57705"/>
        <dbReference type="ChEBI" id="CHEBI:57776"/>
        <dbReference type="EC" id="2.7.7.23"/>
    </reaction>
</comment>
<comment type="cofactor">
    <cofactor evidence="2">
        <name>Mg(2+)</name>
        <dbReference type="ChEBI" id="CHEBI:18420"/>
    </cofactor>
    <text evidence="2">Binds 1 Mg(2+) ion per subunit.</text>
</comment>
<comment type="pathway">
    <text evidence="2">Nucleotide-sugar biosynthesis; UDP-N-acetyl-alpha-D-glucosamine biosynthesis; N-acetyl-alpha-D-glucosamine 1-phosphate from alpha-D-glucosamine 6-phosphate (route II): step 2/2.</text>
</comment>
<comment type="pathway">
    <text evidence="2">Nucleotide-sugar biosynthesis; UDP-N-acetyl-alpha-D-glucosamine biosynthesis; UDP-N-acetyl-alpha-D-glucosamine from N-acetyl-alpha-D-glucosamine 1-phosphate: step 1/1.</text>
</comment>
<comment type="pathway">
    <text evidence="2">Bacterial outer membrane biogenesis; LPS lipid A biosynthesis.</text>
</comment>
<comment type="subunit">
    <text evidence="2">Homotrimer.</text>
</comment>
<comment type="subcellular location">
    <subcellularLocation>
        <location evidence="2">Cytoplasm</location>
    </subcellularLocation>
</comment>
<comment type="PTM">
    <text evidence="1">Phosphorylated at the C-terminal domain by PknB. The phosphorylation is required for acetyltransferase activity, but does not affect uridyltransferase activity (By similarity).</text>
</comment>
<comment type="similarity">
    <text evidence="2">In the N-terminal section; belongs to the N-acetylglucosamine-1-phosphate uridyltransferase family.</text>
</comment>
<comment type="similarity">
    <text evidence="2">In the C-terminal section; belongs to the transferase hexapeptide repeat family.</text>
</comment>
<comment type="sequence caution" evidence="4">
    <conflict type="erroneous initiation">
        <sequence resource="EMBL-CDS" id="AAK45297"/>
    </conflict>
    <text>Extended N-terminus.</text>
</comment>
<protein>
    <recommendedName>
        <fullName evidence="2">Bifunctional protein GlmU</fullName>
    </recommendedName>
    <domain>
        <recommendedName>
            <fullName evidence="2">UDP-N-acetylglucosamine pyrophosphorylase</fullName>
            <ecNumber evidence="2">2.7.7.23</ecNumber>
        </recommendedName>
        <alternativeName>
            <fullName evidence="2">N-acetylglucosamine-1-phosphate uridyltransferase</fullName>
        </alternativeName>
    </domain>
    <domain>
        <recommendedName>
            <fullName evidence="2">Glucosamine-1-phosphate N-acetyltransferase</fullName>
            <ecNumber evidence="2">2.3.1.157</ecNumber>
        </recommendedName>
    </domain>
</protein>
<proteinExistence type="evidence at protein level"/>
<keyword id="KW-0002">3D-structure</keyword>
<keyword id="KW-0012">Acyltransferase</keyword>
<keyword id="KW-0133">Cell shape</keyword>
<keyword id="KW-0961">Cell wall biogenesis/degradation</keyword>
<keyword id="KW-0963">Cytoplasm</keyword>
<keyword id="KW-0460">Magnesium</keyword>
<keyword id="KW-0479">Metal-binding</keyword>
<keyword id="KW-0511">Multifunctional enzyme</keyword>
<keyword id="KW-0548">Nucleotidyltransferase</keyword>
<keyword id="KW-0573">Peptidoglycan synthesis</keyword>
<keyword id="KW-1185">Reference proteome</keyword>
<keyword id="KW-0677">Repeat</keyword>
<keyword id="KW-0808">Transferase</keyword>
<reference key="1">
    <citation type="journal article" date="2002" name="J. Bacteriol.">
        <title>Whole-genome comparison of Mycobacterium tuberculosis clinical and laboratory strains.</title>
        <authorList>
            <person name="Fleischmann R.D."/>
            <person name="Alland D."/>
            <person name="Eisen J.A."/>
            <person name="Carpenter L."/>
            <person name="White O."/>
            <person name="Peterson J.D."/>
            <person name="DeBoy R.T."/>
            <person name="Dodson R.J."/>
            <person name="Gwinn M.L."/>
            <person name="Haft D.H."/>
            <person name="Hickey E.K."/>
            <person name="Kolonay J.F."/>
            <person name="Nelson W.C."/>
            <person name="Umayam L.A."/>
            <person name="Ermolaeva M.D."/>
            <person name="Salzberg S.L."/>
            <person name="Delcher A."/>
            <person name="Utterback T.R."/>
            <person name="Weidman J.F."/>
            <person name="Khouri H.M."/>
            <person name="Gill J."/>
            <person name="Mikula A."/>
            <person name="Bishai W."/>
            <person name="Jacobs W.R. Jr."/>
            <person name="Venter J.C."/>
            <person name="Fraser C.M."/>
        </authorList>
    </citation>
    <scope>NUCLEOTIDE SEQUENCE [LARGE SCALE GENOMIC DNA]</scope>
    <source>
        <strain>CDC 1551 / Oshkosh</strain>
    </source>
</reference>
<feature type="chain" id="PRO_0000427274" description="Bifunctional protein GlmU">
    <location>
        <begin position="1"/>
        <end position="495"/>
    </location>
</feature>
<feature type="region of interest" description="Pyrophosphorylase" evidence="2">
    <location>
        <begin position="1"/>
        <end position="241"/>
    </location>
</feature>
<feature type="region of interest" description="Linker" evidence="2">
    <location>
        <begin position="242"/>
        <end position="262"/>
    </location>
</feature>
<feature type="region of interest" description="N-acetyltransferase" evidence="2">
    <location>
        <begin position="263"/>
        <end position="495"/>
    </location>
</feature>
<feature type="region of interest" description="Disordered" evidence="3">
    <location>
        <begin position="457"/>
        <end position="495"/>
    </location>
</feature>
<feature type="compositionally biased region" description="Low complexity" evidence="3">
    <location>
        <begin position="483"/>
        <end position="495"/>
    </location>
</feature>
<feature type="active site" description="Proton acceptor" evidence="2">
    <location>
        <position position="374"/>
    </location>
</feature>
<feature type="binding site" evidence="2">
    <location>
        <begin position="12"/>
        <end position="15"/>
    </location>
    <ligand>
        <name>UDP-N-acetyl-alpha-D-glucosamine</name>
        <dbReference type="ChEBI" id="CHEBI:57705"/>
    </ligand>
</feature>
<feature type="binding site" evidence="2">
    <location>
        <position position="26"/>
    </location>
    <ligand>
        <name>UDP-N-acetyl-alpha-D-glucosamine</name>
        <dbReference type="ChEBI" id="CHEBI:57705"/>
    </ligand>
</feature>
<feature type="binding site" evidence="2">
    <location>
        <position position="83"/>
    </location>
    <ligand>
        <name>UDP-N-acetyl-alpha-D-glucosamine</name>
        <dbReference type="ChEBI" id="CHEBI:57705"/>
    </ligand>
</feature>
<feature type="binding site" evidence="2">
    <location>
        <begin position="88"/>
        <end position="89"/>
    </location>
    <ligand>
        <name>UDP-N-acetyl-alpha-D-glucosamine</name>
        <dbReference type="ChEBI" id="CHEBI:57705"/>
    </ligand>
</feature>
<feature type="binding site" evidence="2">
    <location>
        <begin position="112"/>
        <end position="114"/>
    </location>
    <ligand>
        <name>UDP-N-acetyl-alpha-D-glucosamine</name>
        <dbReference type="ChEBI" id="CHEBI:57705"/>
    </ligand>
</feature>
<feature type="binding site" evidence="2">
    <location>
        <position position="114"/>
    </location>
    <ligand>
        <name>Mg(2+)</name>
        <dbReference type="ChEBI" id="CHEBI:18420"/>
    </ligand>
</feature>
<feature type="binding site" evidence="2">
    <location>
        <position position="151"/>
    </location>
    <ligand>
        <name>UDP-N-acetyl-alpha-D-glucosamine</name>
        <dbReference type="ChEBI" id="CHEBI:57705"/>
    </ligand>
</feature>
<feature type="binding site" evidence="2">
    <location>
        <position position="166"/>
    </location>
    <ligand>
        <name>UDP-N-acetyl-alpha-D-glucosamine</name>
        <dbReference type="ChEBI" id="CHEBI:57705"/>
    </ligand>
</feature>
<feature type="binding site" evidence="2">
    <location>
        <position position="181"/>
    </location>
    <ligand>
        <name>UDP-N-acetyl-alpha-D-glucosamine</name>
        <dbReference type="ChEBI" id="CHEBI:57705"/>
    </ligand>
</feature>
<feature type="binding site" evidence="2">
    <location>
        <position position="239"/>
    </location>
    <ligand>
        <name>Mg(2+)</name>
        <dbReference type="ChEBI" id="CHEBI:18420"/>
    </ligand>
</feature>
<feature type="binding site" evidence="2">
    <location>
        <position position="239"/>
    </location>
    <ligand>
        <name>UDP-N-acetyl-alpha-D-glucosamine</name>
        <dbReference type="ChEBI" id="CHEBI:57705"/>
    </ligand>
</feature>
<feature type="binding site" evidence="2">
    <location>
        <position position="344"/>
    </location>
    <ligand>
        <name>UDP-N-acetyl-alpha-D-glucosamine</name>
        <dbReference type="ChEBI" id="CHEBI:57705"/>
    </ligand>
</feature>
<feature type="binding site" evidence="2">
    <location>
        <position position="362"/>
    </location>
    <ligand>
        <name>UDP-N-acetyl-alpha-D-glucosamine</name>
        <dbReference type="ChEBI" id="CHEBI:57705"/>
    </ligand>
</feature>
<feature type="binding site" evidence="2">
    <location>
        <position position="377"/>
    </location>
    <ligand>
        <name>UDP-N-acetyl-alpha-D-glucosamine</name>
        <dbReference type="ChEBI" id="CHEBI:57705"/>
    </ligand>
</feature>
<feature type="binding site" evidence="2">
    <location>
        <position position="388"/>
    </location>
    <ligand>
        <name>UDP-N-acetyl-alpha-D-glucosamine</name>
        <dbReference type="ChEBI" id="CHEBI:57705"/>
    </ligand>
</feature>
<feature type="binding site" evidence="2">
    <location>
        <position position="391"/>
    </location>
    <ligand>
        <name>acetyl-CoA</name>
        <dbReference type="ChEBI" id="CHEBI:57288"/>
    </ligand>
</feature>
<feature type="binding site" evidence="2">
    <location>
        <begin position="397"/>
        <end position="398"/>
    </location>
    <ligand>
        <name>acetyl-CoA</name>
        <dbReference type="ChEBI" id="CHEBI:57288"/>
    </ligand>
</feature>
<feature type="binding site" evidence="2">
    <location>
        <position position="416"/>
    </location>
    <ligand>
        <name>acetyl-CoA</name>
        <dbReference type="ChEBI" id="CHEBI:57288"/>
    </ligand>
</feature>
<feature type="binding site" evidence="2">
    <location>
        <position position="434"/>
    </location>
    <ligand>
        <name>acetyl-CoA</name>
        <dbReference type="ChEBI" id="CHEBI:57288"/>
    </ligand>
</feature>
<name>GLMU_MYCTO</name>
<dbReference type="EC" id="2.7.7.23" evidence="2"/>
<dbReference type="EC" id="2.3.1.157" evidence="2"/>
<dbReference type="EMBL" id="AE000516">
    <property type="protein sequence ID" value="AAK45297.1"/>
    <property type="status" value="ALT_INIT"/>
    <property type="molecule type" value="Genomic_DNA"/>
</dbReference>
<dbReference type="PIR" id="E70622">
    <property type="entry name" value="E70622"/>
</dbReference>
<dbReference type="RefSeq" id="WP_003405267.1">
    <property type="nucleotide sequence ID" value="NZ_KK341227.1"/>
</dbReference>
<dbReference type="PDB" id="4K6R">
    <property type="method" value="X-ray"/>
    <property type="resolution" value="1.98 A"/>
    <property type="chains" value="A=1-495"/>
</dbReference>
<dbReference type="PDBsum" id="4K6R"/>
<dbReference type="SMR" id="P9WMN2"/>
<dbReference type="KEGG" id="mtc:MT1046"/>
<dbReference type="PATRIC" id="fig|83331.31.peg.1122"/>
<dbReference type="HOGENOM" id="CLU_029499_15_2_11"/>
<dbReference type="UniPathway" id="UPA00113">
    <property type="reaction ID" value="UER00532"/>
</dbReference>
<dbReference type="UniPathway" id="UPA00113">
    <property type="reaction ID" value="UER00533"/>
</dbReference>
<dbReference type="UniPathway" id="UPA00973"/>
<dbReference type="Proteomes" id="UP000001020">
    <property type="component" value="Chromosome"/>
</dbReference>
<dbReference type="GO" id="GO:0005737">
    <property type="term" value="C:cytoplasm"/>
    <property type="evidence" value="ECO:0007669"/>
    <property type="project" value="UniProtKB-SubCell"/>
</dbReference>
<dbReference type="GO" id="GO:0016020">
    <property type="term" value="C:membrane"/>
    <property type="evidence" value="ECO:0007669"/>
    <property type="project" value="GOC"/>
</dbReference>
<dbReference type="GO" id="GO:0019134">
    <property type="term" value="F:glucosamine-1-phosphate N-acetyltransferase activity"/>
    <property type="evidence" value="ECO:0007669"/>
    <property type="project" value="UniProtKB-UniRule"/>
</dbReference>
<dbReference type="GO" id="GO:0000287">
    <property type="term" value="F:magnesium ion binding"/>
    <property type="evidence" value="ECO:0007669"/>
    <property type="project" value="UniProtKB-UniRule"/>
</dbReference>
<dbReference type="GO" id="GO:0003977">
    <property type="term" value="F:UDP-N-acetylglucosamine diphosphorylase activity"/>
    <property type="evidence" value="ECO:0007669"/>
    <property type="project" value="UniProtKB-UniRule"/>
</dbReference>
<dbReference type="GO" id="GO:0000902">
    <property type="term" value="P:cell morphogenesis"/>
    <property type="evidence" value="ECO:0007669"/>
    <property type="project" value="UniProtKB-UniRule"/>
</dbReference>
<dbReference type="GO" id="GO:0071555">
    <property type="term" value="P:cell wall organization"/>
    <property type="evidence" value="ECO:0007669"/>
    <property type="project" value="UniProtKB-KW"/>
</dbReference>
<dbReference type="GO" id="GO:0009245">
    <property type="term" value="P:lipid A biosynthetic process"/>
    <property type="evidence" value="ECO:0007669"/>
    <property type="project" value="UniProtKB-UniRule"/>
</dbReference>
<dbReference type="GO" id="GO:0009252">
    <property type="term" value="P:peptidoglycan biosynthetic process"/>
    <property type="evidence" value="ECO:0007669"/>
    <property type="project" value="UniProtKB-UniRule"/>
</dbReference>
<dbReference type="GO" id="GO:0008360">
    <property type="term" value="P:regulation of cell shape"/>
    <property type="evidence" value="ECO:0007669"/>
    <property type="project" value="UniProtKB-KW"/>
</dbReference>
<dbReference type="GO" id="GO:0006048">
    <property type="term" value="P:UDP-N-acetylglucosamine biosynthetic process"/>
    <property type="evidence" value="ECO:0007669"/>
    <property type="project" value="UniProtKB-UniPathway"/>
</dbReference>
<dbReference type="CDD" id="cd02540">
    <property type="entry name" value="GT2_GlmU_N_bac"/>
    <property type="match status" value="1"/>
</dbReference>
<dbReference type="CDD" id="cd03353">
    <property type="entry name" value="LbH_GlmU_C"/>
    <property type="match status" value="1"/>
</dbReference>
<dbReference type="FunFam" id="2.160.10.10:FF:000028">
    <property type="entry name" value="Bifunctional protein GlmU"/>
    <property type="match status" value="1"/>
</dbReference>
<dbReference type="FunFam" id="3.90.550.10:FF:000006">
    <property type="entry name" value="Bifunctional protein GlmU"/>
    <property type="match status" value="1"/>
</dbReference>
<dbReference type="Gene3D" id="2.160.10.10">
    <property type="entry name" value="Hexapeptide repeat proteins"/>
    <property type="match status" value="1"/>
</dbReference>
<dbReference type="Gene3D" id="3.90.550.10">
    <property type="entry name" value="Spore Coat Polysaccharide Biosynthesis Protein SpsA, Chain A"/>
    <property type="match status" value="1"/>
</dbReference>
<dbReference type="HAMAP" id="MF_01631">
    <property type="entry name" value="GlmU"/>
    <property type="match status" value="1"/>
</dbReference>
<dbReference type="InterPro" id="IPR005882">
    <property type="entry name" value="Bifunctional_GlmU"/>
</dbReference>
<dbReference type="InterPro" id="IPR050065">
    <property type="entry name" value="GlmU-like"/>
</dbReference>
<dbReference type="InterPro" id="IPR038009">
    <property type="entry name" value="GlmU_C_LbH"/>
</dbReference>
<dbReference type="InterPro" id="IPR001451">
    <property type="entry name" value="Hexapep"/>
</dbReference>
<dbReference type="InterPro" id="IPR025877">
    <property type="entry name" value="MobA-like_NTP_Trfase"/>
</dbReference>
<dbReference type="InterPro" id="IPR029044">
    <property type="entry name" value="Nucleotide-diphossugar_trans"/>
</dbReference>
<dbReference type="InterPro" id="IPR011004">
    <property type="entry name" value="Trimer_LpxA-like_sf"/>
</dbReference>
<dbReference type="NCBIfam" id="TIGR01173">
    <property type="entry name" value="glmU"/>
    <property type="match status" value="1"/>
</dbReference>
<dbReference type="NCBIfam" id="NF010932">
    <property type="entry name" value="PRK14352.1"/>
    <property type="match status" value="1"/>
</dbReference>
<dbReference type="PANTHER" id="PTHR43584:SF3">
    <property type="entry name" value="BIFUNCTIONAL PROTEIN GLMU"/>
    <property type="match status" value="1"/>
</dbReference>
<dbReference type="PANTHER" id="PTHR43584">
    <property type="entry name" value="NUCLEOTIDYL TRANSFERASE"/>
    <property type="match status" value="1"/>
</dbReference>
<dbReference type="Pfam" id="PF00132">
    <property type="entry name" value="Hexapep"/>
    <property type="match status" value="1"/>
</dbReference>
<dbReference type="Pfam" id="PF12804">
    <property type="entry name" value="NTP_transf_3"/>
    <property type="match status" value="1"/>
</dbReference>
<dbReference type="SUPFAM" id="SSF53448">
    <property type="entry name" value="Nucleotide-diphospho-sugar transferases"/>
    <property type="match status" value="1"/>
</dbReference>
<dbReference type="SUPFAM" id="SSF51161">
    <property type="entry name" value="Trimeric LpxA-like enzymes"/>
    <property type="match status" value="1"/>
</dbReference>
<accession>P9WMN2</accession>
<accession>L0T872</accession>
<accession>P96382</accession>
<accession>Q7D8Z8</accession>